<reference key="1">
    <citation type="journal article" date="2005" name="Science">
        <title>The transcriptional landscape of the mammalian genome.</title>
        <authorList>
            <person name="Carninci P."/>
            <person name="Kasukawa T."/>
            <person name="Katayama S."/>
            <person name="Gough J."/>
            <person name="Frith M.C."/>
            <person name="Maeda N."/>
            <person name="Oyama R."/>
            <person name="Ravasi T."/>
            <person name="Lenhard B."/>
            <person name="Wells C."/>
            <person name="Kodzius R."/>
            <person name="Shimokawa K."/>
            <person name="Bajic V.B."/>
            <person name="Brenner S.E."/>
            <person name="Batalov S."/>
            <person name="Forrest A.R."/>
            <person name="Zavolan M."/>
            <person name="Davis M.J."/>
            <person name="Wilming L.G."/>
            <person name="Aidinis V."/>
            <person name="Allen J.E."/>
            <person name="Ambesi-Impiombato A."/>
            <person name="Apweiler R."/>
            <person name="Aturaliya R.N."/>
            <person name="Bailey T.L."/>
            <person name="Bansal M."/>
            <person name="Baxter L."/>
            <person name="Beisel K.W."/>
            <person name="Bersano T."/>
            <person name="Bono H."/>
            <person name="Chalk A.M."/>
            <person name="Chiu K.P."/>
            <person name="Choudhary V."/>
            <person name="Christoffels A."/>
            <person name="Clutterbuck D.R."/>
            <person name="Crowe M.L."/>
            <person name="Dalla E."/>
            <person name="Dalrymple B.P."/>
            <person name="de Bono B."/>
            <person name="Della Gatta G."/>
            <person name="di Bernardo D."/>
            <person name="Down T."/>
            <person name="Engstrom P."/>
            <person name="Fagiolini M."/>
            <person name="Faulkner G."/>
            <person name="Fletcher C.F."/>
            <person name="Fukushima T."/>
            <person name="Furuno M."/>
            <person name="Futaki S."/>
            <person name="Gariboldi M."/>
            <person name="Georgii-Hemming P."/>
            <person name="Gingeras T.R."/>
            <person name="Gojobori T."/>
            <person name="Green R.E."/>
            <person name="Gustincich S."/>
            <person name="Harbers M."/>
            <person name="Hayashi Y."/>
            <person name="Hensch T.K."/>
            <person name="Hirokawa N."/>
            <person name="Hill D."/>
            <person name="Huminiecki L."/>
            <person name="Iacono M."/>
            <person name="Ikeo K."/>
            <person name="Iwama A."/>
            <person name="Ishikawa T."/>
            <person name="Jakt M."/>
            <person name="Kanapin A."/>
            <person name="Katoh M."/>
            <person name="Kawasawa Y."/>
            <person name="Kelso J."/>
            <person name="Kitamura H."/>
            <person name="Kitano H."/>
            <person name="Kollias G."/>
            <person name="Krishnan S.P."/>
            <person name="Kruger A."/>
            <person name="Kummerfeld S.K."/>
            <person name="Kurochkin I.V."/>
            <person name="Lareau L.F."/>
            <person name="Lazarevic D."/>
            <person name="Lipovich L."/>
            <person name="Liu J."/>
            <person name="Liuni S."/>
            <person name="McWilliam S."/>
            <person name="Madan Babu M."/>
            <person name="Madera M."/>
            <person name="Marchionni L."/>
            <person name="Matsuda H."/>
            <person name="Matsuzawa S."/>
            <person name="Miki H."/>
            <person name="Mignone F."/>
            <person name="Miyake S."/>
            <person name="Morris K."/>
            <person name="Mottagui-Tabar S."/>
            <person name="Mulder N."/>
            <person name="Nakano N."/>
            <person name="Nakauchi H."/>
            <person name="Ng P."/>
            <person name="Nilsson R."/>
            <person name="Nishiguchi S."/>
            <person name="Nishikawa S."/>
            <person name="Nori F."/>
            <person name="Ohara O."/>
            <person name="Okazaki Y."/>
            <person name="Orlando V."/>
            <person name="Pang K.C."/>
            <person name="Pavan W.J."/>
            <person name="Pavesi G."/>
            <person name="Pesole G."/>
            <person name="Petrovsky N."/>
            <person name="Piazza S."/>
            <person name="Reed J."/>
            <person name="Reid J.F."/>
            <person name="Ring B.Z."/>
            <person name="Ringwald M."/>
            <person name="Rost B."/>
            <person name="Ruan Y."/>
            <person name="Salzberg S.L."/>
            <person name="Sandelin A."/>
            <person name="Schneider C."/>
            <person name="Schoenbach C."/>
            <person name="Sekiguchi K."/>
            <person name="Semple C.A."/>
            <person name="Seno S."/>
            <person name="Sessa L."/>
            <person name="Sheng Y."/>
            <person name="Shibata Y."/>
            <person name="Shimada H."/>
            <person name="Shimada K."/>
            <person name="Silva D."/>
            <person name="Sinclair B."/>
            <person name="Sperling S."/>
            <person name="Stupka E."/>
            <person name="Sugiura K."/>
            <person name="Sultana R."/>
            <person name="Takenaka Y."/>
            <person name="Taki K."/>
            <person name="Tammoja K."/>
            <person name="Tan S.L."/>
            <person name="Tang S."/>
            <person name="Taylor M.S."/>
            <person name="Tegner J."/>
            <person name="Teichmann S.A."/>
            <person name="Ueda H.R."/>
            <person name="van Nimwegen E."/>
            <person name="Verardo R."/>
            <person name="Wei C.L."/>
            <person name="Yagi K."/>
            <person name="Yamanishi H."/>
            <person name="Zabarovsky E."/>
            <person name="Zhu S."/>
            <person name="Zimmer A."/>
            <person name="Hide W."/>
            <person name="Bult C."/>
            <person name="Grimmond S.M."/>
            <person name="Teasdale R.D."/>
            <person name="Liu E.T."/>
            <person name="Brusic V."/>
            <person name="Quackenbush J."/>
            <person name="Wahlestedt C."/>
            <person name="Mattick J.S."/>
            <person name="Hume D.A."/>
            <person name="Kai C."/>
            <person name="Sasaki D."/>
            <person name="Tomaru Y."/>
            <person name="Fukuda S."/>
            <person name="Kanamori-Katayama M."/>
            <person name="Suzuki M."/>
            <person name="Aoki J."/>
            <person name="Arakawa T."/>
            <person name="Iida J."/>
            <person name="Imamura K."/>
            <person name="Itoh M."/>
            <person name="Kato T."/>
            <person name="Kawaji H."/>
            <person name="Kawagashira N."/>
            <person name="Kawashima T."/>
            <person name="Kojima M."/>
            <person name="Kondo S."/>
            <person name="Konno H."/>
            <person name="Nakano K."/>
            <person name="Ninomiya N."/>
            <person name="Nishio T."/>
            <person name="Okada M."/>
            <person name="Plessy C."/>
            <person name="Shibata K."/>
            <person name="Shiraki T."/>
            <person name="Suzuki S."/>
            <person name="Tagami M."/>
            <person name="Waki K."/>
            <person name="Watahiki A."/>
            <person name="Okamura-Oho Y."/>
            <person name="Suzuki H."/>
            <person name="Kawai J."/>
            <person name="Hayashizaki Y."/>
        </authorList>
    </citation>
    <scope>NUCLEOTIDE SEQUENCE [LARGE SCALE MRNA]</scope>
    <source>
        <strain>C57BL/6J</strain>
        <tissue>Bone marrow</tissue>
    </source>
</reference>
<reference key="2">
    <citation type="journal article" date="2004" name="Genome Res.">
        <title>The status, quality, and expansion of the NIH full-length cDNA project: the Mammalian Gene Collection (MGC).</title>
        <authorList>
            <consortium name="The MGC Project Team"/>
        </authorList>
    </citation>
    <scope>NUCLEOTIDE SEQUENCE [LARGE SCALE MRNA]</scope>
    <source>
        <strain>FVB/N</strain>
        <tissue>Mammary tumor</tissue>
    </source>
</reference>
<reference key="3">
    <citation type="journal article" date="2006" name="Mol. Cell. Proteomics">
        <title>Comprehensive identification of phosphorylation sites in postsynaptic density preparations.</title>
        <authorList>
            <person name="Trinidad J.C."/>
            <person name="Specht C.G."/>
            <person name="Thalhammer A."/>
            <person name="Schoepfer R."/>
            <person name="Burlingame A.L."/>
        </authorList>
    </citation>
    <scope>IDENTIFICATION BY MASS SPECTROMETRY [LARGE SCALE ANALYSIS]</scope>
    <source>
        <tissue>Brain</tissue>
    </source>
</reference>
<reference key="4">
    <citation type="journal article" date="2010" name="Cell">
        <title>A tissue-specific atlas of mouse protein phosphorylation and expression.</title>
        <authorList>
            <person name="Huttlin E.L."/>
            <person name="Jedrychowski M.P."/>
            <person name="Elias J.E."/>
            <person name="Goswami T."/>
            <person name="Rad R."/>
            <person name="Beausoleil S.A."/>
            <person name="Villen J."/>
            <person name="Haas W."/>
            <person name="Sowa M.E."/>
            <person name="Gygi S.P."/>
        </authorList>
    </citation>
    <scope>IDENTIFICATION BY MASS SPECTROMETRY [LARGE SCALE ANALYSIS]</scope>
    <source>
        <tissue>Brain</tissue>
        <tissue>Pancreas</tissue>
        <tissue>Spleen</tissue>
        <tissue>Testis</tissue>
    </source>
</reference>
<keyword id="KW-0007">Acetylation</keyword>
<keyword id="KW-1017">Isopeptide bond</keyword>
<keyword id="KW-0507">mRNA processing</keyword>
<keyword id="KW-0508">mRNA splicing</keyword>
<keyword id="KW-0539">Nucleus</keyword>
<keyword id="KW-1185">Reference proteome</keyword>
<keyword id="KW-0694">RNA-binding</keyword>
<keyword id="KW-0747">Spliceosome</keyword>
<keyword id="KW-0832">Ubl conjugation</keyword>
<sequence>MAMQAAKRANIRLPPEVNRILYIRNLPYKITAEEMYDIFGKYGPIRQIRVGNTPETRGTAYVVYEDIFDAKNACDHLSGFNVCNRYLVVLYYNANRAFQKMDTKKKEEQLKLLKEKYGINTDPPK</sequence>
<gene>
    <name type="primary">Sf3b6</name>
    <name type="synonym">Sf3b14</name>
</gene>
<evidence type="ECO:0000250" key="1"/>
<evidence type="ECO:0000250" key="2">
    <source>
        <dbReference type="UniProtKB" id="Q9Y3B4"/>
    </source>
</evidence>
<evidence type="ECO:0000255" key="3">
    <source>
        <dbReference type="PROSITE-ProRule" id="PRU00176"/>
    </source>
</evidence>
<organism>
    <name type="scientific">Mus musculus</name>
    <name type="common">Mouse</name>
    <dbReference type="NCBI Taxonomy" id="10090"/>
    <lineage>
        <taxon>Eukaryota</taxon>
        <taxon>Metazoa</taxon>
        <taxon>Chordata</taxon>
        <taxon>Craniata</taxon>
        <taxon>Vertebrata</taxon>
        <taxon>Euteleostomi</taxon>
        <taxon>Mammalia</taxon>
        <taxon>Eutheria</taxon>
        <taxon>Euarchontoglires</taxon>
        <taxon>Glires</taxon>
        <taxon>Rodentia</taxon>
        <taxon>Myomorpha</taxon>
        <taxon>Muroidea</taxon>
        <taxon>Muridae</taxon>
        <taxon>Murinae</taxon>
        <taxon>Mus</taxon>
        <taxon>Mus</taxon>
    </lineage>
</organism>
<accession>P59708</accession>
<accession>Q3U9T9</accession>
<comment type="function">
    <text evidence="2">Component of the 17S U2 SnRNP complex of the spliceosome, a large ribonucleoprotein complex that removes introns from transcribed pre-mRNAs. The 17S U2 SnRNP complex (1) directly participates in early spliceosome assembly and (2) mediates recognition of the intron branch site during pre-mRNA splicing by promoting the selection of the pre-mRNA branch-site adenosine, the nucleophile for the first step of splicing. Within the 17S U2 SnRNP complex, SF3B6 is part of the SF3B subcomplex, which is required for 'A' complex assembly formed by the stable binding of U2 snRNP to the branchpoint sequence in pre-mRNA. Sequence independent binding of SF3A and SF3B subcomplexes upstream of the branch site is essential, it may anchor U2 snRNP to the pre-mRNA. Within the 17S U2 SnRNP complex, SF3B6 directly contacts the pre-mRNA branch site adenosine for the first catalytic step of splicing. SF3B6 stabilizes the intron branch site-U2 snRNA duplex, thereby promoting-binding of introns with poor sequence complementarity. Also acts as a component of the minor spliceosome, which is involved in the splicing of U12-type introns in pre-mRNAs.</text>
</comment>
<comment type="subunit">
    <text evidence="2">Component of the 17S U2 SnRNP complex, a ribonucleoprotein complex that contains small nuclear RNA (snRNA) U2 and a number of specific proteins. Part of the SF3B subcomplex of the 17S U2 SnRNP complex. SF3B associates with the splicing subcomplex SF3A and a 12S RNA unit to form the U2 small nuclear ribonucleoproteins complex (U2 snRNP). Within the SF3B complex interacts directly with SF3B1. Component of the minor spliceosome, which splices U12-type introns.</text>
</comment>
<comment type="subcellular location">
    <subcellularLocation>
        <location evidence="2">Nucleus</location>
    </subcellularLocation>
</comment>
<proteinExistence type="evidence at protein level"/>
<feature type="chain" id="PRO_0000081726" description="Splicing factor 3B subunit 6">
    <location>
        <begin position="1"/>
        <end position="125"/>
    </location>
</feature>
<feature type="domain" description="RRM" evidence="3">
    <location>
        <begin position="19"/>
        <end position="94"/>
    </location>
</feature>
<feature type="region of interest" description="Interaction with pre-mRNA branch site" evidence="1">
    <location>
        <begin position="16"/>
        <end position="29"/>
    </location>
</feature>
<feature type="modified residue" description="N6-acetyllysine; alternate" evidence="2">
    <location>
        <position position="29"/>
    </location>
</feature>
<feature type="modified residue" description="N6-acetyllysine" evidence="2">
    <location>
        <position position="41"/>
    </location>
</feature>
<feature type="cross-link" description="Glycyl lysine isopeptide (Lys-Gly) (interchain with G-Cter in SUMO2); alternate" evidence="2">
    <location>
        <position position="29"/>
    </location>
</feature>
<dbReference type="EMBL" id="AK002375">
    <property type="protein sequence ID" value="BAB22052.1"/>
    <property type="molecule type" value="mRNA"/>
</dbReference>
<dbReference type="EMBL" id="AK003683">
    <property type="protein sequence ID" value="BAB22936.1"/>
    <property type="molecule type" value="mRNA"/>
</dbReference>
<dbReference type="EMBL" id="AK151648">
    <property type="protein sequence ID" value="BAE30577.1"/>
    <property type="molecule type" value="mRNA"/>
</dbReference>
<dbReference type="EMBL" id="BC019535">
    <property type="protein sequence ID" value="AAH19535.1"/>
    <property type="molecule type" value="mRNA"/>
</dbReference>
<dbReference type="CCDS" id="CCDS25791.1"/>
<dbReference type="RefSeq" id="NP_079599.1">
    <property type="nucleotide sequence ID" value="NM_025323.2"/>
</dbReference>
<dbReference type="BMRB" id="P59708"/>
<dbReference type="SMR" id="P59708"/>
<dbReference type="BioGRID" id="211182">
    <property type="interactions" value="10"/>
</dbReference>
<dbReference type="FunCoup" id="P59708">
    <property type="interactions" value="3960"/>
</dbReference>
<dbReference type="IntAct" id="P59708">
    <property type="interactions" value="4"/>
</dbReference>
<dbReference type="MINT" id="P59708"/>
<dbReference type="STRING" id="10090.ENSMUSP00000043662"/>
<dbReference type="GlyGen" id="P59708">
    <property type="glycosylation" value="1 site, 1 O-linked glycan (1 site)"/>
</dbReference>
<dbReference type="iPTMnet" id="P59708"/>
<dbReference type="PhosphoSitePlus" id="P59708"/>
<dbReference type="SwissPalm" id="P59708"/>
<dbReference type="jPOST" id="P59708"/>
<dbReference type="PaxDb" id="10090-ENSMUSP00000043662"/>
<dbReference type="PeptideAtlas" id="P59708"/>
<dbReference type="ProteomicsDB" id="261508"/>
<dbReference type="Pumba" id="P59708"/>
<dbReference type="Antibodypedia" id="27422">
    <property type="antibodies" value="160 antibodies from 23 providers"/>
</dbReference>
<dbReference type="DNASU" id="66055"/>
<dbReference type="Ensembl" id="ENSMUST00000046207.9">
    <property type="protein sequence ID" value="ENSMUSP00000043662.8"/>
    <property type="gene ID" value="ENSMUSG00000037361.9"/>
</dbReference>
<dbReference type="GeneID" id="66055"/>
<dbReference type="KEGG" id="mmu:66055"/>
<dbReference type="UCSC" id="uc007myi.1">
    <property type="organism name" value="mouse"/>
</dbReference>
<dbReference type="AGR" id="MGI:1913305"/>
<dbReference type="CTD" id="51639"/>
<dbReference type="MGI" id="MGI:1913305">
    <property type="gene designation" value="Sf3b6"/>
</dbReference>
<dbReference type="VEuPathDB" id="HostDB:ENSMUSG00000037361"/>
<dbReference type="eggNOG" id="KOG0114">
    <property type="taxonomic scope" value="Eukaryota"/>
</dbReference>
<dbReference type="GeneTree" id="ENSGT00390000005908"/>
<dbReference type="HOGENOM" id="CLU_012062_25_2_1"/>
<dbReference type="InParanoid" id="P59708"/>
<dbReference type="OMA" id="HQPDKMV"/>
<dbReference type="OrthoDB" id="275748at2759"/>
<dbReference type="PhylomeDB" id="P59708"/>
<dbReference type="TreeFam" id="TF314161"/>
<dbReference type="BioGRID-ORCS" id="66055">
    <property type="hits" value="24 hits in 76 CRISPR screens"/>
</dbReference>
<dbReference type="ChiTaRS" id="Sf3b6">
    <property type="organism name" value="mouse"/>
</dbReference>
<dbReference type="PRO" id="PR:P59708"/>
<dbReference type="Proteomes" id="UP000000589">
    <property type="component" value="Chromosome 12"/>
</dbReference>
<dbReference type="RNAct" id="P59708">
    <property type="molecule type" value="protein"/>
</dbReference>
<dbReference type="Bgee" id="ENSMUSG00000037361">
    <property type="expression patterns" value="Expressed in saccule of membranous labyrinth and 257 other cell types or tissues"/>
</dbReference>
<dbReference type="ExpressionAtlas" id="P59708">
    <property type="expression patterns" value="baseline and differential"/>
</dbReference>
<dbReference type="GO" id="GO:0005654">
    <property type="term" value="C:nucleoplasm"/>
    <property type="evidence" value="ECO:0007669"/>
    <property type="project" value="Ensembl"/>
</dbReference>
<dbReference type="GO" id="GO:0005634">
    <property type="term" value="C:nucleus"/>
    <property type="evidence" value="ECO:0000314"/>
    <property type="project" value="MGI"/>
</dbReference>
<dbReference type="GO" id="GO:0005689">
    <property type="term" value="C:U12-type spliceosomal complex"/>
    <property type="evidence" value="ECO:0007669"/>
    <property type="project" value="Ensembl"/>
</dbReference>
<dbReference type="GO" id="GO:0005684">
    <property type="term" value="C:U2-type spliceosomal complex"/>
    <property type="evidence" value="ECO:0007669"/>
    <property type="project" value="Ensembl"/>
</dbReference>
<dbReference type="GO" id="GO:0003729">
    <property type="term" value="F:mRNA binding"/>
    <property type="evidence" value="ECO:0000250"/>
    <property type="project" value="UniProtKB"/>
</dbReference>
<dbReference type="GO" id="GO:0001825">
    <property type="term" value="P:blastocyst formation"/>
    <property type="evidence" value="ECO:0000315"/>
    <property type="project" value="MGI"/>
</dbReference>
<dbReference type="GO" id="GO:0000398">
    <property type="term" value="P:mRNA splicing, via spliceosome"/>
    <property type="evidence" value="ECO:0000315"/>
    <property type="project" value="MGI"/>
</dbReference>
<dbReference type="CDD" id="cd12241">
    <property type="entry name" value="RRM_SF3B14"/>
    <property type="match status" value="1"/>
</dbReference>
<dbReference type="FunFam" id="3.30.70.330:FF:000106">
    <property type="entry name" value="Splicing factor 3b, subunit 6"/>
    <property type="match status" value="1"/>
</dbReference>
<dbReference type="Gene3D" id="3.30.70.330">
    <property type="match status" value="1"/>
</dbReference>
<dbReference type="InterPro" id="IPR012677">
    <property type="entry name" value="Nucleotide-bd_a/b_plait_sf"/>
</dbReference>
<dbReference type="InterPro" id="IPR035979">
    <property type="entry name" value="RBD_domain_sf"/>
</dbReference>
<dbReference type="InterPro" id="IPR000504">
    <property type="entry name" value="RRM_dom"/>
</dbReference>
<dbReference type="InterPro" id="IPR050374">
    <property type="entry name" value="RRT5_SRSF_SR"/>
</dbReference>
<dbReference type="InterPro" id="IPR034150">
    <property type="entry name" value="SF3B6_RRM"/>
</dbReference>
<dbReference type="PANTHER" id="PTHR23003">
    <property type="entry name" value="RNA RECOGNITION MOTIF RRM DOMAIN CONTAINING PROTEIN"/>
    <property type="match status" value="1"/>
</dbReference>
<dbReference type="Pfam" id="PF00076">
    <property type="entry name" value="RRM_1"/>
    <property type="match status" value="1"/>
</dbReference>
<dbReference type="SMART" id="SM00360">
    <property type="entry name" value="RRM"/>
    <property type="match status" value="1"/>
</dbReference>
<dbReference type="SUPFAM" id="SSF54928">
    <property type="entry name" value="RNA-binding domain, RBD"/>
    <property type="match status" value="1"/>
</dbReference>
<dbReference type="PROSITE" id="PS50102">
    <property type="entry name" value="RRM"/>
    <property type="match status" value="1"/>
</dbReference>
<protein>
    <recommendedName>
        <fullName>Splicing factor 3B subunit 6</fullName>
    </recommendedName>
    <alternativeName>
        <fullName>Pre-mRNA branch site protein p14</fullName>
    </alternativeName>
    <alternativeName>
        <fullName>SF3b 14 kDa subunit</fullName>
    </alternativeName>
</protein>
<name>SF3B6_MOUSE</name>